<protein>
    <recommendedName>
        <fullName evidence="1">Triosephosphate isomerase</fullName>
        <shortName evidence="1">TIM</shortName>
        <shortName evidence="1">TPI</shortName>
        <ecNumber evidence="1">5.3.1.1</ecNumber>
    </recommendedName>
    <alternativeName>
        <fullName evidence="1">Triose-phosphate isomerase</fullName>
    </alternativeName>
</protein>
<evidence type="ECO:0000255" key="1">
    <source>
        <dbReference type="HAMAP-Rule" id="MF_00147"/>
    </source>
</evidence>
<accession>Q9HQS4</accession>
<sequence>MFVLVNLKAYPCDPVAIAEAAADVAETTPATIAVAPQPADIGRVADTGATTYAQHVSPTEHGSHTGSVLAESVADNGAVGTLLNHSEHRRRLADIDGSVAAAERAGLDTVVCANNPAQVAAAAALGPDAVAVEPPALIGTGTPVSQADPDIVSDAVAAAEAVDPSVDVYCGAGITTGEDVVSAGDLGASGVLLASGVAKADDPRAALADLVAPL</sequence>
<feature type="chain" id="PRO_0000090331" description="Triosephosphate isomerase">
    <location>
        <begin position="1"/>
        <end position="214"/>
    </location>
</feature>
<feature type="active site" description="Electrophile" evidence="1">
    <location>
        <position position="85"/>
    </location>
</feature>
<feature type="active site" description="Proton acceptor" evidence="1">
    <location>
        <position position="133"/>
    </location>
</feature>
<feature type="binding site" evidence="1">
    <location>
        <begin position="6"/>
        <end position="8"/>
    </location>
    <ligand>
        <name>substrate</name>
    </ligand>
</feature>
<feature type="binding site" evidence="1">
    <location>
        <position position="138"/>
    </location>
    <ligand>
        <name>substrate</name>
    </ligand>
</feature>
<feature type="binding site" evidence="1">
    <location>
        <position position="173"/>
    </location>
    <ligand>
        <name>substrate</name>
    </ligand>
</feature>
<feature type="binding site" evidence="1">
    <location>
        <begin position="194"/>
        <end position="195"/>
    </location>
    <ligand>
        <name>substrate</name>
    </ligand>
</feature>
<proteinExistence type="inferred from homology"/>
<name>TPIS_HALSA</name>
<organism>
    <name type="scientific">Halobacterium salinarum (strain ATCC 700922 / JCM 11081 / NRC-1)</name>
    <name type="common">Halobacterium halobium</name>
    <dbReference type="NCBI Taxonomy" id="64091"/>
    <lineage>
        <taxon>Archaea</taxon>
        <taxon>Methanobacteriati</taxon>
        <taxon>Methanobacteriota</taxon>
        <taxon>Stenosarchaea group</taxon>
        <taxon>Halobacteria</taxon>
        <taxon>Halobacteriales</taxon>
        <taxon>Halobacteriaceae</taxon>
        <taxon>Halobacterium</taxon>
        <taxon>Halobacterium salinarum NRC-34001</taxon>
    </lineage>
</organism>
<reference key="1">
    <citation type="journal article" date="2000" name="Proc. Natl. Acad. Sci. U.S.A.">
        <title>Genome sequence of Halobacterium species NRC-1.</title>
        <authorList>
            <person name="Ng W.V."/>
            <person name="Kennedy S.P."/>
            <person name="Mahairas G.G."/>
            <person name="Berquist B."/>
            <person name="Pan M."/>
            <person name="Shukla H.D."/>
            <person name="Lasky S.R."/>
            <person name="Baliga N.S."/>
            <person name="Thorsson V."/>
            <person name="Sbrogna J."/>
            <person name="Swartzell S."/>
            <person name="Weir D."/>
            <person name="Hall J."/>
            <person name="Dahl T.A."/>
            <person name="Welti R."/>
            <person name="Goo Y.A."/>
            <person name="Leithauser B."/>
            <person name="Keller K."/>
            <person name="Cruz R."/>
            <person name="Danson M.J."/>
            <person name="Hough D.W."/>
            <person name="Maddocks D.G."/>
            <person name="Jablonski P.E."/>
            <person name="Krebs M.P."/>
            <person name="Angevine C.M."/>
            <person name="Dale H."/>
            <person name="Isenbarger T.A."/>
            <person name="Peck R.F."/>
            <person name="Pohlschroder M."/>
            <person name="Spudich J.L."/>
            <person name="Jung K.-H."/>
            <person name="Alam M."/>
            <person name="Freitas T."/>
            <person name="Hou S."/>
            <person name="Daniels C.J."/>
            <person name="Dennis P.P."/>
            <person name="Omer A.D."/>
            <person name="Ebhardt H."/>
            <person name="Lowe T.M."/>
            <person name="Liang P."/>
            <person name="Riley M."/>
            <person name="Hood L."/>
            <person name="DasSarma S."/>
        </authorList>
    </citation>
    <scope>NUCLEOTIDE SEQUENCE [LARGE SCALE GENOMIC DNA]</scope>
    <source>
        <strain>ATCC 700922 / JCM 11081 / NRC-1</strain>
    </source>
</reference>
<dbReference type="EC" id="5.3.1.1" evidence="1"/>
<dbReference type="EMBL" id="AE004437">
    <property type="protein sequence ID" value="AAG19439.1"/>
    <property type="molecule type" value="Genomic_DNA"/>
</dbReference>
<dbReference type="PIR" id="C84259">
    <property type="entry name" value="C84259"/>
</dbReference>
<dbReference type="RefSeq" id="WP_010902734.1">
    <property type="nucleotide sequence ID" value="NC_002607.1"/>
</dbReference>
<dbReference type="SMR" id="Q9HQS4"/>
<dbReference type="FunCoup" id="Q9HQS4">
    <property type="interactions" value="182"/>
</dbReference>
<dbReference type="STRING" id="64091.VNG_1027G"/>
<dbReference type="PaxDb" id="64091-VNG_1027G"/>
<dbReference type="GeneID" id="89349407"/>
<dbReference type="KEGG" id="hal:VNG_1027G"/>
<dbReference type="PATRIC" id="fig|64091.14.peg.786"/>
<dbReference type="HOGENOM" id="CLU_104921_0_0_2"/>
<dbReference type="InParanoid" id="Q9HQS4"/>
<dbReference type="OrthoDB" id="9465at2157"/>
<dbReference type="PhylomeDB" id="Q9HQS4"/>
<dbReference type="UniPathway" id="UPA00109">
    <property type="reaction ID" value="UER00189"/>
</dbReference>
<dbReference type="UniPathway" id="UPA00138"/>
<dbReference type="Proteomes" id="UP000000554">
    <property type="component" value="Chromosome"/>
</dbReference>
<dbReference type="GO" id="GO:0005829">
    <property type="term" value="C:cytosol"/>
    <property type="evidence" value="ECO:0000318"/>
    <property type="project" value="GO_Central"/>
</dbReference>
<dbReference type="GO" id="GO:0004807">
    <property type="term" value="F:triose-phosphate isomerase activity"/>
    <property type="evidence" value="ECO:0000318"/>
    <property type="project" value="GO_Central"/>
</dbReference>
<dbReference type="GO" id="GO:0006094">
    <property type="term" value="P:gluconeogenesis"/>
    <property type="evidence" value="ECO:0000318"/>
    <property type="project" value="GO_Central"/>
</dbReference>
<dbReference type="GO" id="GO:0046166">
    <property type="term" value="P:glyceraldehyde-3-phosphate biosynthetic process"/>
    <property type="evidence" value="ECO:0000318"/>
    <property type="project" value="GO_Central"/>
</dbReference>
<dbReference type="GO" id="GO:0019563">
    <property type="term" value="P:glycerol catabolic process"/>
    <property type="evidence" value="ECO:0000318"/>
    <property type="project" value="GO_Central"/>
</dbReference>
<dbReference type="GO" id="GO:0006096">
    <property type="term" value="P:glycolytic process"/>
    <property type="evidence" value="ECO:0000318"/>
    <property type="project" value="GO_Central"/>
</dbReference>
<dbReference type="CDD" id="cd00311">
    <property type="entry name" value="TIM"/>
    <property type="match status" value="1"/>
</dbReference>
<dbReference type="Gene3D" id="3.20.20.70">
    <property type="entry name" value="Aldolase class I"/>
    <property type="match status" value="1"/>
</dbReference>
<dbReference type="HAMAP" id="MF_00147_A">
    <property type="entry name" value="TIM_A"/>
    <property type="match status" value="1"/>
</dbReference>
<dbReference type="InterPro" id="IPR013785">
    <property type="entry name" value="Aldolase_TIM"/>
</dbReference>
<dbReference type="InterPro" id="IPR035990">
    <property type="entry name" value="TIM_sf"/>
</dbReference>
<dbReference type="InterPro" id="IPR000652">
    <property type="entry name" value="Triosephosphate_isomerase"/>
</dbReference>
<dbReference type="InterPro" id="IPR022891">
    <property type="entry name" value="Triosephosphate_isomerase_arc"/>
</dbReference>
<dbReference type="InterPro" id="IPR020861">
    <property type="entry name" value="Triosephosphate_isomerase_AS"/>
</dbReference>
<dbReference type="NCBIfam" id="NF003302">
    <property type="entry name" value="PRK04302.1"/>
    <property type="match status" value="1"/>
</dbReference>
<dbReference type="NCBIfam" id="TIGR00419">
    <property type="entry name" value="tim"/>
    <property type="match status" value="1"/>
</dbReference>
<dbReference type="Pfam" id="PF00121">
    <property type="entry name" value="TIM"/>
    <property type="match status" value="1"/>
</dbReference>
<dbReference type="SUPFAM" id="SSF51351">
    <property type="entry name" value="Triosephosphate isomerase (TIM)"/>
    <property type="match status" value="1"/>
</dbReference>
<dbReference type="PROSITE" id="PS00171">
    <property type="entry name" value="TIM_1"/>
    <property type="match status" value="1"/>
</dbReference>
<dbReference type="PROSITE" id="PS51440">
    <property type="entry name" value="TIM_2"/>
    <property type="match status" value="1"/>
</dbReference>
<gene>
    <name evidence="1" type="primary">tpiA</name>
    <name type="ordered locus">VNG_1027G</name>
</gene>
<keyword id="KW-0963">Cytoplasm</keyword>
<keyword id="KW-0312">Gluconeogenesis</keyword>
<keyword id="KW-0324">Glycolysis</keyword>
<keyword id="KW-0413">Isomerase</keyword>
<keyword id="KW-1185">Reference proteome</keyword>
<comment type="function">
    <text evidence="1">Involved in the gluconeogenesis. Catalyzes stereospecifically the conversion of dihydroxyacetone phosphate (DHAP) to D-glyceraldehyde-3-phosphate (G3P).</text>
</comment>
<comment type="catalytic activity">
    <reaction evidence="1">
        <text>D-glyceraldehyde 3-phosphate = dihydroxyacetone phosphate</text>
        <dbReference type="Rhea" id="RHEA:18585"/>
        <dbReference type="ChEBI" id="CHEBI:57642"/>
        <dbReference type="ChEBI" id="CHEBI:59776"/>
        <dbReference type="EC" id="5.3.1.1"/>
    </reaction>
</comment>
<comment type="pathway">
    <text evidence="1">Carbohydrate biosynthesis; gluconeogenesis.</text>
</comment>
<comment type="pathway">
    <text evidence="1">Carbohydrate degradation; glycolysis; D-glyceraldehyde 3-phosphate from glycerone phosphate: step 1/1.</text>
</comment>
<comment type="subunit">
    <text evidence="1">Homotetramer; dimer of dimers.</text>
</comment>
<comment type="subcellular location">
    <subcellularLocation>
        <location evidence="1">Cytoplasm</location>
    </subcellularLocation>
</comment>
<comment type="similarity">
    <text evidence="1">Belongs to the triosephosphate isomerase family.</text>
</comment>